<comment type="function">
    <text evidence="2">Produces ATP from ADP in the presence of a proton gradient across the membrane. The alpha chain is a regulatory subunit.</text>
</comment>
<comment type="catalytic activity">
    <reaction evidence="2">
        <text>ATP + H2O + 4 H(+)(in) = ADP + phosphate + 5 H(+)(out)</text>
        <dbReference type="Rhea" id="RHEA:57720"/>
        <dbReference type="ChEBI" id="CHEBI:15377"/>
        <dbReference type="ChEBI" id="CHEBI:15378"/>
        <dbReference type="ChEBI" id="CHEBI:30616"/>
        <dbReference type="ChEBI" id="CHEBI:43474"/>
        <dbReference type="ChEBI" id="CHEBI:456216"/>
        <dbReference type="EC" id="7.1.2.2"/>
    </reaction>
</comment>
<comment type="subunit">
    <text evidence="1">F-type ATPases have 2 components, CF(1) - the catalytic core - and CF(0) - the membrane proton channel. CF(1) has five subunits: alpha(3), beta(3), gamma(1), delta(1), epsilon(1). CF(0) has four main subunits: a(1), b(1), b'(1) and c(9-12) (By similarity).</text>
</comment>
<comment type="subcellular location">
    <subcellularLocation>
        <location evidence="2">Cellular thylakoid membrane</location>
        <topology evidence="2">Peripheral membrane protein</topology>
    </subcellularLocation>
</comment>
<comment type="similarity">
    <text evidence="2">Belongs to the ATPase alpha/beta chains family.</text>
</comment>
<protein>
    <recommendedName>
        <fullName evidence="2">ATP synthase subunit alpha</fullName>
        <ecNumber evidence="2">7.1.2.2</ecNumber>
    </recommendedName>
    <alternativeName>
        <fullName evidence="2">ATP synthase F1 sector subunit alpha</fullName>
    </alternativeName>
    <alternativeName>
        <fullName evidence="2">F-ATPase subunit alpha</fullName>
    </alternativeName>
</protein>
<name>ATPA_PROM2</name>
<feature type="chain" id="PRO_1000067715" description="ATP synthase subunit alpha">
    <location>
        <begin position="1"/>
        <end position="505"/>
    </location>
</feature>
<feature type="binding site" evidence="2">
    <location>
        <begin position="170"/>
        <end position="177"/>
    </location>
    <ligand>
        <name>ATP</name>
        <dbReference type="ChEBI" id="CHEBI:30616"/>
    </ligand>
</feature>
<feature type="site" description="Required for activity" evidence="2">
    <location>
        <position position="363"/>
    </location>
</feature>
<accession>A8G6V1</accession>
<dbReference type="EC" id="7.1.2.2" evidence="2"/>
<dbReference type="EMBL" id="CP000825">
    <property type="protein sequence ID" value="ABV51332.1"/>
    <property type="molecule type" value="Genomic_DNA"/>
</dbReference>
<dbReference type="RefSeq" id="WP_002805160.1">
    <property type="nucleotide sequence ID" value="NC_009840.1"/>
</dbReference>
<dbReference type="SMR" id="A8G6V1"/>
<dbReference type="STRING" id="93060.P9215_17191"/>
<dbReference type="KEGG" id="pmh:P9215_17191"/>
<dbReference type="eggNOG" id="COG0056">
    <property type="taxonomic scope" value="Bacteria"/>
</dbReference>
<dbReference type="HOGENOM" id="CLU_010091_2_1_3"/>
<dbReference type="OrthoDB" id="9803053at2"/>
<dbReference type="Proteomes" id="UP000002014">
    <property type="component" value="Chromosome"/>
</dbReference>
<dbReference type="GO" id="GO:0031676">
    <property type="term" value="C:plasma membrane-derived thylakoid membrane"/>
    <property type="evidence" value="ECO:0007669"/>
    <property type="project" value="UniProtKB-SubCell"/>
</dbReference>
<dbReference type="GO" id="GO:0045259">
    <property type="term" value="C:proton-transporting ATP synthase complex"/>
    <property type="evidence" value="ECO:0007669"/>
    <property type="project" value="UniProtKB-KW"/>
</dbReference>
<dbReference type="GO" id="GO:0043531">
    <property type="term" value="F:ADP binding"/>
    <property type="evidence" value="ECO:0007669"/>
    <property type="project" value="TreeGrafter"/>
</dbReference>
<dbReference type="GO" id="GO:0005524">
    <property type="term" value="F:ATP binding"/>
    <property type="evidence" value="ECO:0007669"/>
    <property type="project" value="UniProtKB-UniRule"/>
</dbReference>
<dbReference type="GO" id="GO:0046933">
    <property type="term" value="F:proton-transporting ATP synthase activity, rotational mechanism"/>
    <property type="evidence" value="ECO:0007669"/>
    <property type="project" value="UniProtKB-UniRule"/>
</dbReference>
<dbReference type="CDD" id="cd18113">
    <property type="entry name" value="ATP-synt_F1_alpha_C"/>
    <property type="match status" value="1"/>
</dbReference>
<dbReference type="CDD" id="cd18116">
    <property type="entry name" value="ATP-synt_F1_alpha_N"/>
    <property type="match status" value="1"/>
</dbReference>
<dbReference type="CDD" id="cd01132">
    <property type="entry name" value="F1-ATPase_alpha_CD"/>
    <property type="match status" value="1"/>
</dbReference>
<dbReference type="FunFam" id="1.20.150.20:FF:000001">
    <property type="entry name" value="ATP synthase subunit alpha"/>
    <property type="match status" value="1"/>
</dbReference>
<dbReference type="FunFam" id="2.40.30.20:FF:000001">
    <property type="entry name" value="ATP synthase subunit alpha"/>
    <property type="match status" value="1"/>
</dbReference>
<dbReference type="FunFam" id="3.40.50.300:FF:000002">
    <property type="entry name" value="ATP synthase subunit alpha"/>
    <property type="match status" value="1"/>
</dbReference>
<dbReference type="Gene3D" id="2.40.30.20">
    <property type="match status" value="1"/>
</dbReference>
<dbReference type="Gene3D" id="1.20.150.20">
    <property type="entry name" value="ATP synthase alpha/beta chain, C-terminal domain"/>
    <property type="match status" value="1"/>
</dbReference>
<dbReference type="Gene3D" id="3.40.50.300">
    <property type="entry name" value="P-loop containing nucleotide triphosphate hydrolases"/>
    <property type="match status" value="1"/>
</dbReference>
<dbReference type="HAMAP" id="MF_01346">
    <property type="entry name" value="ATP_synth_alpha_bact"/>
    <property type="match status" value="1"/>
</dbReference>
<dbReference type="InterPro" id="IPR023366">
    <property type="entry name" value="ATP_synth_asu-like_sf"/>
</dbReference>
<dbReference type="InterPro" id="IPR000793">
    <property type="entry name" value="ATP_synth_asu_C"/>
</dbReference>
<dbReference type="InterPro" id="IPR038376">
    <property type="entry name" value="ATP_synth_asu_C_sf"/>
</dbReference>
<dbReference type="InterPro" id="IPR033732">
    <property type="entry name" value="ATP_synth_F1_a_nt-bd_dom"/>
</dbReference>
<dbReference type="InterPro" id="IPR005294">
    <property type="entry name" value="ATP_synth_F1_asu"/>
</dbReference>
<dbReference type="InterPro" id="IPR020003">
    <property type="entry name" value="ATPase_a/bsu_AS"/>
</dbReference>
<dbReference type="InterPro" id="IPR004100">
    <property type="entry name" value="ATPase_F1/V1/A1_a/bsu_N"/>
</dbReference>
<dbReference type="InterPro" id="IPR036121">
    <property type="entry name" value="ATPase_F1/V1/A1_a/bsu_N_sf"/>
</dbReference>
<dbReference type="InterPro" id="IPR000194">
    <property type="entry name" value="ATPase_F1/V1/A1_a/bsu_nucl-bd"/>
</dbReference>
<dbReference type="InterPro" id="IPR027417">
    <property type="entry name" value="P-loop_NTPase"/>
</dbReference>
<dbReference type="NCBIfam" id="TIGR00962">
    <property type="entry name" value="atpA"/>
    <property type="match status" value="1"/>
</dbReference>
<dbReference type="NCBIfam" id="NF009884">
    <property type="entry name" value="PRK13343.1"/>
    <property type="match status" value="1"/>
</dbReference>
<dbReference type="PANTHER" id="PTHR48082">
    <property type="entry name" value="ATP SYNTHASE SUBUNIT ALPHA, MITOCHONDRIAL"/>
    <property type="match status" value="1"/>
</dbReference>
<dbReference type="PANTHER" id="PTHR48082:SF2">
    <property type="entry name" value="ATP SYNTHASE SUBUNIT ALPHA, MITOCHONDRIAL"/>
    <property type="match status" value="1"/>
</dbReference>
<dbReference type="Pfam" id="PF00006">
    <property type="entry name" value="ATP-synt_ab"/>
    <property type="match status" value="1"/>
</dbReference>
<dbReference type="Pfam" id="PF00306">
    <property type="entry name" value="ATP-synt_ab_C"/>
    <property type="match status" value="1"/>
</dbReference>
<dbReference type="Pfam" id="PF02874">
    <property type="entry name" value="ATP-synt_ab_N"/>
    <property type="match status" value="1"/>
</dbReference>
<dbReference type="PIRSF" id="PIRSF039088">
    <property type="entry name" value="F_ATPase_subunit_alpha"/>
    <property type="match status" value="1"/>
</dbReference>
<dbReference type="SUPFAM" id="SSF47917">
    <property type="entry name" value="C-terminal domain of alpha and beta subunits of F1 ATP synthase"/>
    <property type="match status" value="1"/>
</dbReference>
<dbReference type="SUPFAM" id="SSF50615">
    <property type="entry name" value="N-terminal domain of alpha and beta subunits of F1 ATP synthase"/>
    <property type="match status" value="1"/>
</dbReference>
<dbReference type="SUPFAM" id="SSF52540">
    <property type="entry name" value="P-loop containing nucleoside triphosphate hydrolases"/>
    <property type="match status" value="1"/>
</dbReference>
<dbReference type="PROSITE" id="PS00152">
    <property type="entry name" value="ATPASE_ALPHA_BETA"/>
    <property type="match status" value="1"/>
</dbReference>
<sequence length="505" mass="54290">MVSIRPDEISSILKQQITDYDQSVSVSNVGTVLQIGDGIARIYGLDQVMAGELLEFEDGTEGIALNLEDDNVGAVLMGEALGVQEGSNVKSTGKIASVPVGEAMQGRVVNPLGQPIDGKGEIPTSDTRLIEEMAPGIIKRRSVHEPMQTGITSIDAMIPVGRGQRELIIGDRQTGKSAIAIDTIINQKGQDVVCVYVAIGQKSASVANIVEVLRERGALDYTVVVSAGASEPAALQYLAPYTGAAIAEHFMYQGKATLVIYDDLTKQAQAYRQMSLLLKRPPGREAYPGDVFYLHSRLLERAAKLSDAMGGGSMTALPIIETQAGDVSAYIPTNVISITDGQIFLSADLFNSGLRPAINVGISVSRVGGAAQTKAIKKIAGTLKLELAQFDELAAFSQFASDLDEATQQQLERGKRLRELLKQPQFSPLNLAEQVAVVYAGVKGLIDEVPVEEVTKFATELREYLKLNKAEFIEEILKEKKLNDGLEATLKEVINEVKSSMLATV</sequence>
<organism>
    <name type="scientific">Prochlorococcus marinus (strain MIT 9215)</name>
    <dbReference type="NCBI Taxonomy" id="93060"/>
    <lineage>
        <taxon>Bacteria</taxon>
        <taxon>Bacillati</taxon>
        <taxon>Cyanobacteriota</taxon>
        <taxon>Cyanophyceae</taxon>
        <taxon>Synechococcales</taxon>
        <taxon>Prochlorococcaceae</taxon>
        <taxon>Prochlorococcus</taxon>
    </lineage>
</organism>
<keyword id="KW-0066">ATP synthesis</keyword>
<keyword id="KW-0067">ATP-binding</keyword>
<keyword id="KW-0139">CF(1)</keyword>
<keyword id="KW-0375">Hydrogen ion transport</keyword>
<keyword id="KW-0406">Ion transport</keyword>
<keyword id="KW-0472">Membrane</keyword>
<keyword id="KW-0547">Nucleotide-binding</keyword>
<keyword id="KW-0793">Thylakoid</keyword>
<keyword id="KW-1278">Translocase</keyword>
<keyword id="KW-0813">Transport</keyword>
<evidence type="ECO:0000250" key="1"/>
<evidence type="ECO:0000255" key="2">
    <source>
        <dbReference type="HAMAP-Rule" id="MF_01346"/>
    </source>
</evidence>
<proteinExistence type="inferred from homology"/>
<reference key="1">
    <citation type="journal article" date="2007" name="PLoS Genet.">
        <title>Patterns and implications of gene gain and loss in the evolution of Prochlorococcus.</title>
        <authorList>
            <person name="Kettler G.C."/>
            <person name="Martiny A.C."/>
            <person name="Huang K."/>
            <person name="Zucker J."/>
            <person name="Coleman M.L."/>
            <person name="Rodrigue S."/>
            <person name="Chen F."/>
            <person name="Lapidus A."/>
            <person name="Ferriera S."/>
            <person name="Johnson J."/>
            <person name="Steglich C."/>
            <person name="Church G.M."/>
            <person name="Richardson P."/>
            <person name="Chisholm S.W."/>
        </authorList>
    </citation>
    <scope>NUCLEOTIDE SEQUENCE [LARGE SCALE GENOMIC DNA]</scope>
    <source>
        <strain>MIT 9215</strain>
    </source>
</reference>
<gene>
    <name evidence="2" type="primary">atpA</name>
    <name type="ordered locus">P9215_17191</name>
</gene>